<accession>E9PYK3</accession>
<accession>Q6A0B1</accession>
<accession>Q80UW6</accession>
<accession>Q8BW82</accession>
<accession>Q8R3A5</accession>
<proteinExistence type="evidence at protein level"/>
<evidence type="ECO:0000250" key="1">
    <source>
        <dbReference type="UniProtKB" id="Q8K3Y6"/>
    </source>
</evidence>
<evidence type="ECO:0000250" key="2">
    <source>
        <dbReference type="UniProtKB" id="Q9UKK3"/>
    </source>
</evidence>
<evidence type="ECO:0000255" key="3"/>
<evidence type="ECO:0000255" key="4">
    <source>
        <dbReference type="PROSITE-ProRule" id="PRU00033"/>
    </source>
</evidence>
<evidence type="ECO:0000255" key="5">
    <source>
        <dbReference type="PROSITE-ProRule" id="PRU00219"/>
    </source>
</evidence>
<evidence type="ECO:0000255" key="6">
    <source>
        <dbReference type="PROSITE-ProRule" id="PRU00397"/>
    </source>
</evidence>
<evidence type="ECO:0000255" key="7">
    <source>
        <dbReference type="PROSITE-ProRule" id="PRU00398"/>
    </source>
</evidence>
<evidence type="ECO:0000255" key="8">
    <source>
        <dbReference type="PROSITE-ProRule" id="PRU00801"/>
    </source>
</evidence>
<evidence type="ECO:0000256" key="9">
    <source>
        <dbReference type="SAM" id="MobiDB-lite"/>
    </source>
</evidence>
<evidence type="ECO:0000269" key="10">
    <source>
    </source>
</evidence>
<evidence type="ECO:0000303" key="11">
    <source>
    </source>
</evidence>
<evidence type="ECO:0000303" key="12">
    <source>
    </source>
</evidence>
<evidence type="ECO:0000305" key="13"/>
<evidence type="ECO:0000312" key="14">
    <source>
        <dbReference type="MGI" id="MGI:2685589"/>
    </source>
</evidence>
<comment type="function">
    <text evidence="2">Mono-ADP-ribosyltransferase that mediates mono-ADP-ribosylation of target proteins.</text>
</comment>
<comment type="catalytic activity">
    <reaction evidence="2">
        <text>L-aspartyl-[protein] + NAD(+) = 4-O-(ADP-D-ribosyl)-L-aspartyl-[protein] + nicotinamide</text>
        <dbReference type="Rhea" id="RHEA:54424"/>
        <dbReference type="Rhea" id="RHEA-COMP:9867"/>
        <dbReference type="Rhea" id="RHEA-COMP:13832"/>
        <dbReference type="ChEBI" id="CHEBI:17154"/>
        <dbReference type="ChEBI" id="CHEBI:29961"/>
        <dbReference type="ChEBI" id="CHEBI:57540"/>
        <dbReference type="ChEBI" id="CHEBI:138102"/>
    </reaction>
</comment>
<comment type="catalytic activity">
    <reaction evidence="2">
        <text>L-glutamyl-[protein] + NAD(+) = 5-O-(ADP-D-ribosyl)-L-glutamyl-[protein] + nicotinamide</text>
        <dbReference type="Rhea" id="RHEA:58224"/>
        <dbReference type="Rhea" id="RHEA-COMP:10208"/>
        <dbReference type="Rhea" id="RHEA-COMP:15089"/>
        <dbReference type="ChEBI" id="CHEBI:17154"/>
        <dbReference type="ChEBI" id="CHEBI:29973"/>
        <dbReference type="ChEBI" id="CHEBI:57540"/>
        <dbReference type="ChEBI" id="CHEBI:142540"/>
    </reaction>
</comment>
<comment type="subunit">
    <text evidence="2">Component of the vault ribonucleoprotein particle, at least composed of MVP, PARP4 and one or more vault RNAs (vRNAs). Interacts with TEP1.</text>
</comment>
<comment type="subcellular location">
    <subcellularLocation>
        <location evidence="1">Cytoplasm</location>
    </subcellularLocation>
    <subcellularLocation>
        <location evidence="1">Nucleus</location>
    </subcellularLocation>
    <text evidence="1">Localizes in the cytoplasm at steady state, but shuttles between nucleus and cytoplasm in a XPO1-dependent manner.</text>
</comment>
<comment type="disruption phenotype">
    <text evidence="10">No visible phenotype (PubMed:15169895). Mice are viable and fertile for up to five generations, with no apparent changes in telomerase activity or telomere length (PubMed:15169895).</text>
</comment>
<comment type="similarity">
    <text evidence="13">Belongs to the ARTD/PARP family.</text>
</comment>
<comment type="sequence caution" evidence="13">
    <conflict type="erroneous initiation">
        <sequence resource="EMBL-CDS" id="BAD32185"/>
    </conflict>
    <text>Extended N-terminus.</text>
</comment>
<gene>
    <name evidence="14" type="primary">Parp4</name>
    <name evidence="12" type="synonym">Kiaa0177</name>
</gene>
<keyword id="KW-0963">Cytoplasm</keyword>
<keyword id="KW-0328">Glycosyltransferase</keyword>
<keyword id="KW-0488">Methylation</keyword>
<keyword id="KW-0520">NAD</keyword>
<keyword id="KW-0548">Nucleotidyltransferase</keyword>
<keyword id="KW-0539">Nucleus</keyword>
<keyword id="KW-0597">Phosphoprotein</keyword>
<keyword id="KW-1185">Reference proteome</keyword>
<keyword id="KW-0687">Ribonucleoprotein</keyword>
<keyword id="KW-0808">Transferase</keyword>
<protein>
    <recommendedName>
        <fullName evidence="13">Protein mono-ADP-ribosyltransferase PARP4</fullName>
        <ecNumber evidence="2">2.4.2.-</ecNumber>
    </recommendedName>
    <alternativeName>
        <fullName evidence="2">ADP-ribosyltransferase diphtheria toxin-like 4</fullName>
        <shortName evidence="2">ARTD4</shortName>
    </alternativeName>
    <alternativeName>
        <fullName evidence="2">Poly [ADP-ribose] polymerase 4</fullName>
        <shortName evidence="2">PARP-4</shortName>
    </alternativeName>
    <alternativeName>
        <fullName evidence="11">Vault poly(ADP-ribose) polymerase</fullName>
        <shortName evidence="11">VPARP</shortName>
        <shortName evidence="11">mVparp</shortName>
    </alternativeName>
</protein>
<dbReference type="EC" id="2.4.2.-" evidence="2"/>
<dbReference type="EMBL" id="AC154731">
    <property type="status" value="NOT_ANNOTATED_CDS"/>
    <property type="molecule type" value="Genomic_DNA"/>
</dbReference>
<dbReference type="EMBL" id="AC154837">
    <property type="status" value="NOT_ANNOTATED_CDS"/>
    <property type="molecule type" value="Genomic_DNA"/>
</dbReference>
<dbReference type="EMBL" id="AK172907">
    <property type="protein sequence ID" value="BAD32185.1"/>
    <property type="status" value="ALT_INIT"/>
    <property type="molecule type" value="mRNA"/>
</dbReference>
<dbReference type="EMBL" id="BC025847">
    <property type="protein sequence ID" value="AAH25847.1"/>
    <property type="molecule type" value="mRNA"/>
</dbReference>
<dbReference type="EMBL" id="BC046397">
    <property type="protein sequence ID" value="AAH46397.1"/>
    <property type="molecule type" value="mRNA"/>
</dbReference>
<dbReference type="EMBL" id="AK053992">
    <property type="protein sequence ID" value="BAC35611.1"/>
    <property type="molecule type" value="mRNA"/>
</dbReference>
<dbReference type="CCDS" id="CCDS49503.1"/>
<dbReference type="RefSeq" id="NP_001139450.2">
    <property type="nucleotide sequence ID" value="NM_001145978.2"/>
</dbReference>
<dbReference type="SMR" id="E9PYK3"/>
<dbReference type="FunCoup" id="E9PYK3">
    <property type="interactions" value="1378"/>
</dbReference>
<dbReference type="STRING" id="10090.ENSMUSP00000124258"/>
<dbReference type="GlyGen" id="E9PYK3">
    <property type="glycosylation" value="1 site, 1 O-linked glycan (1 site)"/>
</dbReference>
<dbReference type="iPTMnet" id="E9PYK3"/>
<dbReference type="PhosphoSitePlus" id="E9PYK3"/>
<dbReference type="jPOST" id="E9PYK3"/>
<dbReference type="PaxDb" id="10090-ENSMUSP00000124258"/>
<dbReference type="PeptideAtlas" id="E9PYK3"/>
<dbReference type="ProteomicsDB" id="365736"/>
<dbReference type="Pumba" id="E9PYK3"/>
<dbReference type="Antibodypedia" id="1562">
    <property type="antibodies" value="199 antibodies from 27 providers"/>
</dbReference>
<dbReference type="Ensembl" id="ENSMUST00000161553.2">
    <property type="protein sequence ID" value="ENSMUSP00000124258.2"/>
    <property type="gene ID" value="ENSMUSG00000054509.8"/>
</dbReference>
<dbReference type="GeneID" id="328417"/>
<dbReference type="KEGG" id="mmu:328417"/>
<dbReference type="UCSC" id="uc007ucd.2">
    <property type="organism name" value="mouse"/>
</dbReference>
<dbReference type="AGR" id="MGI:2685589"/>
<dbReference type="CTD" id="143"/>
<dbReference type="MGI" id="MGI:2685589">
    <property type="gene designation" value="Parp4"/>
</dbReference>
<dbReference type="VEuPathDB" id="HostDB:ENSMUSG00000054509"/>
<dbReference type="eggNOG" id="KOG1037">
    <property type="taxonomic scope" value="Eukaryota"/>
</dbReference>
<dbReference type="GeneTree" id="ENSGT00940000160555"/>
<dbReference type="HOGENOM" id="CLU_001437_0_0_1"/>
<dbReference type="InParanoid" id="E9PYK3"/>
<dbReference type="OMA" id="KLAKPNM"/>
<dbReference type="OrthoDB" id="63991at9989"/>
<dbReference type="PhylomeDB" id="E9PYK3"/>
<dbReference type="TreeFam" id="TF329720"/>
<dbReference type="Reactome" id="R-MMU-197264">
    <property type="pathway name" value="Nicotinamide salvaging"/>
</dbReference>
<dbReference type="BioGRID-ORCS" id="328417">
    <property type="hits" value="2 hits in 79 CRISPR screens"/>
</dbReference>
<dbReference type="ChiTaRS" id="Parp4">
    <property type="organism name" value="mouse"/>
</dbReference>
<dbReference type="PRO" id="PR:E9PYK3"/>
<dbReference type="Proteomes" id="UP000000589">
    <property type="component" value="Chromosome 14"/>
</dbReference>
<dbReference type="RNAct" id="E9PYK3">
    <property type="molecule type" value="protein"/>
</dbReference>
<dbReference type="Bgee" id="ENSMUSG00000054509">
    <property type="expression patterns" value="Expressed in lumbar dorsal root ganglion and 171 other cell types or tissues"/>
</dbReference>
<dbReference type="GO" id="GO:0005829">
    <property type="term" value="C:cytosol"/>
    <property type="evidence" value="ECO:0007669"/>
    <property type="project" value="Ensembl"/>
</dbReference>
<dbReference type="GO" id="GO:0005654">
    <property type="term" value="C:nucleoplasm"/>
    <property type="evidence" value="ECO:0007669"/>
    <property type="project" value="Ensembl"/>
</dbReference>
<dbReference type="GO" id="GO:0005634">
    <property type="term" value="C:nucleus"/>
    <property type="evidence" value="ECO:0000304"/>
    <property type="project" value="MGI"/>
</dbReference>
<dbReference type="GO" id="GO:1990904">
    <property type="term" value="C:ribonucleoprotein complex"/>
    <property type="evidence" value="ECO:0007669"/>
    <property type="project" value="UniProtKB-KW"/>
</dbReference>
<dbReference type="GO" id="GO:0005819">
    <property type="term" value="C:spindle"/>
    <property type="evidence" value="ECO:0000304"/>
    <property type="project" value="MGI"/>
</dbReference>
<dbReference type="GO" id="GO:0005876">
    <property type="term" value="C:spindle microtubule"/>
    <property type="evidence" value="ECO:0007669"/>
    <property type="project" value="Ensembl"/>
</dbReference>
<dbReference type="GO" id="GO:0019899">
    <property type="term" value="F:enzyme binding"/>
    <property type="evidence" value="ECO:0000266"/>
    <property type="project" value="MGI"/>
</dbReference>
<dbReference type="GO" id="GO:0003950">
    <property type="term" value="F:NAD+ poly-ADP-ribosyltransferase activity"/>
    <property type="evidence" value="ECO:0007669"/>
    <property type="project" value="Ensembl"/>
</dbReference>
<dbReference type="GO" id="GO:1990404">
    <property type="term" value="F:NAD+-protein mono-ADP-ribosyltransferase activity"/>
    <property type="evidence" value="ECO:0000250"/>
    <property type="project" value="UniProtKB"/>
</dbReference>
<dbReference type="GO" id="GO:0140806">
    <property type="term" value="F:NAD+-protein-aspartate ADP-ribosyltransferase activity"/>
    <property type="evidence" value="ECO:0007669"/>
    <property type="project" value="RHEA"/>
</dbReference>
<dbReference type="GO" id="GO:0140807">
    <property type="term" value="F:NAD+-protein-glutamate ADP-ribosyltransferase activity"/>
    <property type="evidence" value="ECO:0007669"/>
    <property type="project" value="RHEA"/>
</dbReference>
<dbReference type="GO" id="GO:0016779">
    <property type="term" value="F:nucleotidyltransferase activity"/>
    <property type="evidence" value="ECO:0007669"/>
    <property type="project" value="UniProtKB-KW"/>
</dbReference>
<dbReference type="GO" id="GO:0006954">
    <property type="term" value="P:inflammatory response"/>
    <property type="evidence" value="ECO:0007669"/>
    <property type="project" value="Ensembl"/>
</dbReference>
<dbReference type="GO" id="GO:0036211">
    <property type="term" value="P:protein modification process"/>
    <property type="evidence" value="ECO:0007669"/>
    <property type="project" value="Ensembl"/>
</dbReference>
<dbReference type="CDD" id="cd01437">
    <property type="entry name" value="parp_like"/>
    <property type="match status" value="1"/>
</dbReference>
<dbReference type="CDD" id="cd00198">
    <property type="entry name" value="vWFA"/>
    <property type="match status" value="1"/>
</dbReference>
<dbReference type="FunFam" id="3.40.50.10190:FF:000065">
    <property type="entry name" value="Poly [ADP-ribose] polymerase"/>
    <property type="match status" value="1"/>
</dbReference>
<dbReference type="FunFam" id="3.40.50.410:FF:000083">
    <property type="entry name" value="Poly [ADP-ribose] polymerase"/>
    <property type="match status" value="1"/>
</dbReference>
<dbReference type="FunFam" id="3.90.228.10:FF:000013">
    <property type="entry name" value="Poly [ADP-ribose] polymerase"/>
    <property type="match status" value="1"/>
</dbReference>
<dbReference type="Gene3D" id="3.90.228.10">
    <property type="match status" value="1"/>
</dbReference>
<dbReference type="Gene3D" id="3.40.50.10190">
    <property type="entry name" value="BRCT domain"/>
    <property type="match status" value="1"/>
</dbReference>
<dbReference type="Gene3D" id="3.40.50.410">
    <property type="entry name" value="von Willebrand factor, type A domain"/>
    <property type="match status" value="1"/>
</dbReference>
<dbReference type="InterPro" id="IPR001357">
    <property type="entry name" value="BRCT_dom"/>
</dbReference>
<dbReference type="InterPro" id="IPR036420">
    <property type="entry name" value="BRCT_dom_sf"/>
</dbReference>
<dbReference type="InterPro" id="IPR031273">
    <property type="entry name" value="PARP4"/>
</dbReference>
<dbReference type="InterPro" id="IPR012317">
    <property type="entry name" value="Poly(ADP-ribose)pol_cat_dom"/>
</dbReference>
<dbReference type="InterPro" id="IPR004102">
    <property type="entry name" value="Poly(ADP-ribose)pol_reg_dom"/>
</dbReference>
<dbReference type="InterPro" id="IPR036616">
    <property type="entry name" value="Poly(ADP-ribose)pol_reg_dom_sf"/>
</dbReference>
<dbReference type="InterPro" id="IPR013694">
    <property type="entry name" value="VIT"/>
</dbReference>
<dbReference type="InterPro" id="IPR002035">
    <property type="entry name" value="VWF_A"/>
</dbReference>
<dbReference type="InterPro" id="IPR036465">
    <property type="entry name" value="vWFA_dom_sf"/>
</dbReference>
<dbReference type="PANTHER" id="PTHR46530">
    <property type="entry name" value="PROTEIN MONO-ADP-RIBOSYLTRANSFERASE PARP4"/>
    <property type="match status" value="1"/>
</dbReference>
<dbReference type="PANTHER" id="PTHR46530:SF1">
    <property type="entry name" value="PROTEIN MONO-ADP-RIBOSYLTRANSFERASE PARP4"/>
    <property type="match status" value="1"/>
</dbReference>
<dbReference type="Pfam" id="PF00533">
    <property type="entry name" value="BRCT"/>
    <property type="match status" value="1"/>
</dbReference>
<dbReference type="Pfam" id="PF06346">
    <property type="entry name" value="Drf_FH1"/>
    <property type="match status" value="1"/>
</dbReference>
<dbReference type="Pfam" id="PF00644">
    <property type="entry name" value="PARP"/>
    <property type="match status" value="1"/>
</dbReference>
<dbReference type="Pfam" id="PF08487">
    <property type="entry name" value="VIT"/>
    <property type="match status" value="1"/>
</dbReference>
<dbReference type="Pfam" id="PF13768">
    <property type="entry name" value="VWA_3"/>
    <property type="match status" value="1"/>
</dbReference>
<dbReference type="SMART" id="SM00292">
    <property type="entry name" value="BRCT"/>
    <property type="match status" value="1"/>
</dbReference>
<dbReference type="SMART" id="SM00609">
    <property type="entry name" value="VIT"/>
    <property type="match status" value="1"/>
</dbReference>
<dbReference type="SMART" id="SM00327">
    <property type="entry name" value="VWA"/>
    <property type="match status" value="1"/>
</dbReference>
<dbReference type="SUPFAM" id="SSF56399">
    <property type="entry name" value="ADP-ribosylation"/>
    <property type="match status" value="1"/>
</dbReference>
<dbReference type="SUPFAM" id="SSF52113">
    <property type="entry name" value="BRCT domain"/>
    <property type="match status" value="1"/>
</dbReference>
<dbReference type="SUPFAM" id="SSF47587">
    <property type="entry name" value="Domain of poly(ADP-ribose) polymerase"/>
    <property type="match status" value="1"/>
</dbReference>
<dbReference type="SUPFAM" id="SSF53300">
    <property type="entry name" value="vWA-like"/>
    <property type="match status" value="1"/>
</dbReference>
<dbReference type="PROSITE" id="PS50172">
    <property type="entry name" value="BRCT"/>
    <property type="match status" value="1"/>
</dbReference>
<dbReference type="PROSITE" id="PS51060">
    <property type="entry name" value="PARP_ALPHA_HD"/>
    <property type="match status" value="1"/>
</dbReference>
<dbReference type="PROSITE" id="PS51059">
    <property type="entry name" value="PARP_CATALYTIC"/>
    <property type="match status" value="1"/>
</dbReference>
<dbReference type="PROSITE" id="PS51468">
    <property type="entry name" value="VIT"/>
    <property type="match status" value="1"/>
</dbReference>
<dbReference type="PROSITE" id="PS50234">
    <property type="entry name" value="VWFA"/>
    <property type="match status" value="1"/>
</dbReference>
<sequence length="1969" mass="216133">MTLGIFANCIFCLKVKYLPRQQKKKLQTDIKENGGKFSFLLNPQCTHVIVDSADVLSRCHLNSIQKNDVQIANPAFIQDSVRQRRLLDVRNYDPLSPAPAAPPAERSRSEVQSEYLPSDNTPEKENTEVTEVSAENVEIPPFLQDFEVVKYNILEKVGGPETVVVELQSSQDPESCPFVITAHFLLADQKTRRESTGKQTSEGAIEYYESYVEDLKRQGFLLQEHFTAEATQLASEKLQALLLEEVISSGALSQEVSDLLEVIWTEALGHLENTLLKPVNSMSLNDVSKAEGILLLVKTALKNGDSPGQLQKTMAEFYRLLPHRHPASEEVNLRLLAQKEDLCQLVRDMVNVCETNLSKPNPPSLAKYRALRCKIEHVDQNTEEFSRVRKEVLQNNRSEQPVDILQIFRVGRVNEATEFLSKLGNVRLLFHGSPVRNILGILSRGLLLPKVAEDRGVQRTDVGNLGSGIYFSDSLSTSIKYAHAGETDGSRLLVVCDVALGKCVNLFKKDFSLTEAPPGYDSVHGVSETTSVPTDFQDDEFVVYKTNQVKMKYIVKFCTPGDQIKEFHPHENTEVEEQRAEPSSVPEAGDFQLPDIKPFTNIKAGLQDASANPVPLDSVHIKGRVIDFVAQVIVFQTYTNQSHVPIEAKYIFPLDDKAAVCGFEAFINGKHIVGEIKEKEEARQEYREAVSQGHGAYLMDQDTPDVFTVSVGNLPPRAKVLIKITYITELSIQSPVAIFFIPGTVAPWQQDKALNENLQDTVETIRIKEIGAEQSFSLAMSIEMPYMIEFISSDTHELRQKSTDCKAVVSTVEGSSLDSGGFSLHIGLRDAYLPRMWVEKHPEKESEACMLVFQPELADVLPDLRGKNEVIICLDCSSSMEGVTFTQAKQVALYALSLLGEEQKVNIMQFGTGYKELFSYPKCITDSKMATEFIMSAAPSMGNTDFWKVLRYLSLLYPSEGFRNILLISDGHLQSESLTLQLVKRNIQHTRVFTCAVGSTANRHILRTLSQCGAGVFEYFNSKSKHSWKKQIEAQMTRIRSPSCHSVSVKWQQLSRDAPEPLQAPAWVPSLFHNDRLLVYGFIPHCTQATLQAFIQEKEFCTMVSTTELQKTTGTMIHKLAARALIRDYEDGILHDDETNHEMKKNIMKSLIIELSKENSLITQFTSFVAVEKRDVNEIPFANVPNISELVAKEDVDFLPYVSWQEKQPEASISQTEIDSSRLKHNKLSDGHGVLQPVSVSSEVNEKPSLLLAAKKRKIKTIKKCSLDISEDFEDRTAVAQSPATAQSLNFHLPLSVRPQLKAVEQQLHGNRLEPKQRGGFRKLLMAKKCRNVPDSLVSSAPAVTAEFSYLSACSSSSAFLSPLCDIPSSLPPHPLGGTHPPPPLPLPDGTHLPSPLFGSTHPPPPLFGGTLIPPPSSLFGGTHLPPPPPLPGGTHIPPPPPIPGGTLIPPSSSLFGGTHLPPPPLLSAGTHIPPPPLLSAGTHLPPPPLLPAGTHIPPPPPITGSTHPPPPSSLFGGTHLPPPPPLPGGTHIPPPPPIPGGTLIPSPSSLFGGTHLPPPPLLPAGTHIPPPPPITGSTHPPPPSSLFGGTHLPPPPPAGTQFSLSPIGFIPPKLGPPKLSHSHKLVGDTNIHDSEPPLLGFKDLCSRDMGFSCGTAFSGSFASSKDFDPGKFSQGPNNISFSPKAPEMGVLHQSPFCSPPKPPSAPPLVTNVLCSEAPQSYFLNLQSAAVHQSPNNRVSEIIMESVESSLPSDYSSRDASSYLALEGAEDSLLGGSSFETDTDEAAAFIANDLLTSIETSSDEECAFCDEDQESPVPWASLFALQTENGFWKLTPELGLILNLNVNALLTSLEEKGIRSLGTKGRERLLDLIATLLVLQFLYTKLEQEGMVAKSLIKMDDAFISRNIPWAFENIKKAREWARKTEGQYPSICQRLELGKDWESATKQLLGIQPQANTSLHRILYYSQG</sequence>
<feature type="chain" id="PRO_0000446171" description="Protein mono-ADP-ribosyltransferase PARP4">
    <location>
        <begin position="1"/>
        <end position="1969"/>
    </location>
</feature>
<feature type="domain" description="BRCT" evidence="4">
    <location>
        <begin position="1"/>
        <end position="94"/>
    </location>
</feature>
<feature type="domain" description="PARP alpha-helical" evidence="7">
    <location>
        <begin position="235"/>
        <end position="363"/>
    </location>
</feature>
<feature type="domain" description="PARP catalytic" evidence="6">
    <location>
        <begin position="362"/>
        <end position="566"/>
    </location>
</feature>
<feature type="domain" description="VIT" evidence="8">
    <location>
        <begin position="600"/>
        <end position="728"/>
    </location>
</feature>
<feature type="domain" description="VWFA" evidence="5">
    <location>
        <begin position="869"/>
        <end position="1039"/>
    </location>
</feature>
<feature type="domain" description="FH1" evidence="3">
    <location>
        <begin position="1443"/>
        <end position="1541"/>
    </location>
</feature>
<feature type="region of interest" description="Disordered" evidence="9">
    <location>
        <begin position="92"/>
        <end position="132"/>
    </location>
</feature>
<feature type="region of interest" description="Disordered" evidence="9">
    <location>
        <begin position="1372"/>
        <end position="1608"/>
    </location>
</feature>
<feature type="region of interest" description="Interaction with the major vault protein" evidence="2">
    <location>
        <begin position="1808"/>
        <end position="1969"/>
    </location>
</feature>
<feature type="short sequence motif" description="Nuclear localization signal" evidence="3">
    <location>
        <begin position="19"/>
        <end position="25"/>
    </location>
</feature>
<feature type="short sequence motif" description="Nuclear localization signal" evidence="3">
    <location>
        <begin position="1230"/>
        <end position="1242"/>
    </location>
</feature>
<feature type="compositionally biased region" description="Pro residues" evidence="9">
    <location>
        <begin position="1372"/>
        <end position="1387"/>
    </location>
</feature>
<feature type="compositionally biased region" description="Pro residues" evidence="9">
    <location>
        <begin position="1402"/>
        <end position="1417"/>
    </location>
</feature>
<feature type="compositionally biased region" description="Pro residues" evidence="9">
    <location>
        <begin position="1425"/>
        <end position="1444"/>
    </location>
</feature>
<feature type="compositionally biased region" description="Pro residues" evidence="9">
    <location>
        <begin position="1485"/>
        <end position="1513"/>
    </location>
</feature>
<feature type="compositionally biased region" description="Pro residues" evidence="9">
    <location>
        <begin position="1521"/>
        <end position="1540"/>
    </location>
</feature>
<feature type="compositionally biased region" description="Low complexity" evidence="9">
    <location>
        <begin position="1541"/>
        <end position="1556"/>
    </location>
</feature>
<feature type="compositionally biased region" description="Pro residues" evidence="9">
    <location>
        <begin position="1557"/>
        <end position="1585"/>
    </location>
</feature>
<feature type="modified residue" description="Phosphoserine" evidence="2">
    <location>
        <position position="1229"/>
    </location>
</feature>
<feature type="sequence conflict" description="In Ref. 2; BAD32185." evidence="13" ref="2">
    <original>A</original>
    <variation>T</variation>
    <location>
        <position position="611"/>
    </location>
</feature>
<feature type="sequence conflict" description="In Ref. 3; AAH25847." evidence="13" ref="3">
    <original>D</original>
    <variation>N</variation>
    <location>
        <position position="1634"/>
    </location>
</feature>
<feature type="sequence conflict" description="In Ref. 3; AAH25847." evidence="13" ref="3">
    <original>V</original>
    <variation>A</variation>
    <location>
        <position position="1691"/>
    </location>
</feature>
<feature type="sequence conflict" description="In Ref. 4; BAC35611." evidence="13" ref="4">
    <original>D</original>
    <variation>H</variation>
    <location>
        <position position="1754"/>
    </location>
</feature>
<feature type="sequence conflict" description="In Ref. 3; AAH25847." evidence="13" ref="3">
    <original>A</original>
    <variation>T</variation>
    <location>
        <position position="1918"/>
    </location>
</feature>
<reference key="1">
    <citation type="journal article" date="2009" name="PLoS Biol.">
        <title>Lineage-specific biology revealed by a finished genome assembly of the mouse.</title>
        <authorList>
            <person name="Church D.M."/>
            <person name="Goodstadt L."/>
            <person name="Hillier L.W."/>
            <person name="Zody M.C."/>
            <person name="Goldstein S."/>
            <person name="She X."/>
            <person name="Bult C.J."/>
            <person name="Agarwala R."/>
            <person name="Cherry J.L."/>
            <person name="DiCuccio M."/>
            <person name="Hlavina W."/>
            <person name="Kapustin Y."/>
            <person name="Meric P."/>
            <person name="Maglott D."/>
            <person name="Birtle Z."/>
            <person name="Marques A.C."/>
            <person name="Graves T."/>
            <person name="Zhou S."/>
            <person name="Teague B."/>
            <person name="Potamousis K."/>
            <person name="Churas C."/>
            <person name="Place M."/>
            <person name="Herschleb J."/>
            <person name="Runnheim R."/>
            <person name="Forrest D."/>
            <person name="Amos-Landgraf J."/>
            <person name="Schwartz D.C."/>
            <person name="Cheng Z."/>
            <person name="Lindblad-Toh K."/>
            <person name="Eichler E.E."/>
            <person name="Ponting C.P."/>
        </authorList>
    </citation>
    <scope>NUCLEOTIDE SEQUENCE [LARGE SCALE GENOMIC DNA]</scope>
    <source>
        <strain>C57BL/6J</strain>
    </source>
</reference>
<reference key="2">
    <citation type="journal article" date="2004" name="DNA Res.">
        <title>Prediction of the coding sequences of mouse homologues of KIAA gene: IV. The complete nucleotide sequences of 500 mouse KIAA-homologous cDNAs identified by screening of terminal sequences of cDNA clones randomly sampled from size-fractionated libraries.</title>
        <authorList>
            <person name="Okazaki N."/>
            <person name="Kikuno R."/>
            <person name="Ohara R."/>
            <person name="Inamoto S."/>
            <person name="Koseki H."/>
            <person name="Hiraoka S."/>
            <person name="Saga Y."/>
            <person name="Seino S."/>
            <person name="Nishimura M."/>
            <person name="Kaisho T."/>
            <person name="Hoshino K."/>
            <person name="Kitamura H."/>
            <person name="Nagase T."/>
            <person name="Ohara O."/>
            <person name="Koga H."/>
        </authorList>
    </citation>
    <scope>NUCLEOTIDE SEQUENCE [LARGE SCALE MRNA] OF 1-1254</scope>
    <source>
        <tissue>Pancreatic islet</tissue>
    </source>
</reference>
<reference key="3">
    <citation type="journal article" date="2004" name="Genome Res.">
        <title>The status, quality, and expansion of the NIH full-length cDNA project: the Mammalian Gene Collection (MGC).</title>
        <authorList>
            <consortium name="The MGC Project Team"/>
        </authorList>
    </citation>
    <scope>NUCLEOTIDE SEQUENCE [LARGE SCALE MRNA] OF 623-1120 AND 1598-1961</scope>
    <source>
        <strain>Czech II</strain>
        <strain>FVB/N</strain>
    </source>
</reference>
<reference key="4">
    <citation type="journal article" date="2005" name="Science">
        <title>The transcriptional landscape of the mammalian genome.</title>
        <authorList>
            <person name="Carninci P."/>
            <person name="Kasukawa T."/>
            <person name="Katayama S."/>
            <person name="Gough J."/>
            <person name="Frith M.C."/>
            <person name="Maeda N."/>
            <person name="Oyama R."/>
            <person name="Ravasi T."/>
            <person name="Lenhard B."/>
            <person name="Wells C."/>
            <person name="Kodzius R."/>
            <person name="Shimokawa K."/>
            <person name="Bajic V.B."/>
            <person name="Brenner S.E."/>
            <person name="Batalov S."/>
            <person name="Forrest A.R."/>
            <person name="Zavolan M."/>
            <person name="Davis M.J."/>
            <person name="Wilming L.G."/>
            <person name="Aidinis V."/>
            <person name="Allen J.E."/>
            <person name="Ambesi-Impiombato A."/>
            <person name="Apweiler R."/>
            <person name="Aturaliya R.N."/>
            <person name="Bailey T.L."/>
            <person name="Bansal M."/>
            <person name="Baxter L."/>
            <person name="Beisel K.W."/>
            <person name="Bersano T."/>
            <person name="Bono H."/>
            <person name="Chalk A.M."/>
            <person name="Chiu K.P."/>
            <person name="Choudhary V."/>
            <person name="Christoffels A."/>
            <person name="Clutterbuck D.R."/>
            <person name="Crowe M.L."/>
            <person name="Dalla E."/>
            <person name="Dalrymple B.P."/>
            <person name="de Bono B."/>
            <person name="Della Gatta G."/>
            <person name="di Bernardo D."/>
            <person name="Down T."/>
            <person name="Engstrom P."/>
            <person name="Fagiolini M."/>
            <person name="Faulkner G."/>
            <person name="Fletcher C.F."/>
            <person name="Fukushima T."/>
            <person name="Furuno M."/>
            <person name="Futaki S."/>
            <person name="Gariboldi M."/>
            <person name="Georgii-Hemming P."/>
            <person name="Gingeras T.R."/>
            <person name="Gojobori T."/>
            <person name="Green R.E."/>
            <person name="Gustincich S."/>
            <person name="Harbers M."/>
            <person name="Hayashi Y."/>
            <person name="Hensch T.K."/>
            <person name="Hirokawa N."/>
            <person name="Hill D."/>
            <person name="Huminiecki L."/>
            <person name="Iacono M."/>
            <person name="Ikeo K."/>
            <person name="Iwama A."/>
            <person name="Ishikawa T."/>
            <person name="Jakt M."/>
            <person name="Kanapin A."/>
            <person name="Katoh M."/>
            <person name="Kawasawa Y."/>
            <person name="Kelso J."/>
            <person name="Kitamura H."/>
            <person name="Kitano H."/>
            <person name="Kollias G."/>
            <person name="Krishnan S.P."/>
            <person name="Kruger A."/>
            <person name="Kummerfeld S.K."/>
            <person name="Kurochkin I.V."/>
            <person name="Lareau L.F."/>
            <person name="Lazarevic D."/>
            <person name="Lipovich L."/>
            <person name="Liu J."/>
            <person name="Liuni S."/>
            <person name="McWilliam S."/>
            <person name="Madan Babu M."/>
            <person name="Madera M."/>
            <person name="Marchionni L."/>
            <person name="Matsuda H."/>
            <person name="Matsuzawa S."/>
            <person name="Miki H."/>
            <person name="Mignone F."/>
            <person name="Miyake S."/>
            <person name="Morris K."/>
            <person name="Mottagui-Tabar S."/>
            <person name="Mulder N."/>
            <person name="Nakano N."/>
            <person name="Nakauchi H."/>
            <person name="Ng P."/>
            <person name="Nilsson R."/>
            <person name="Nishiguchi S."/>
            <person name="Nishikawa S."/>
            <person name="Nori F."/>
            <person name="Ohara O."/>
            <person name="Okazaki Y."/>
            <person name="Orlando V."/>
            <person name="Pang K.C."/>
            <person name="Pavan W.J."/>
            <person name="Pavesi G."/>
            <person name="Pesole G."/>
            <person name="Petrovsky N."/>
            <person name="Piazza S."/>
            <person name="Reed J."/>
            <person name="Reid J.F."/>
            <person name="Ring B.Z."/>
            <person name="Ringwald M."/>
            <person name="Rost B."/>
            <person name="Ruan Y."/>
            <person name="Salzberg S.L."/>
            <person name="Sandelin A."/>
            <person name="Schneider C."/>
            <person name="Schoenbach C."/>
            <person name="Sekiguchi K."/>
            <person name="Semple C.A."/>
            <person name="Seno S."/>
            <person name="Sessa L."/>
            <person name="Sheng Y."/>
            <person name="Shibata Y."/>
            <person name="Shimada H."/>
            <person name="Shimada K."/>
            <person name="Silva D."/>
            <person name="Sinclair B."/>
            <person name="Sperling S."/>
            <person name="Stupka E."/>
            <person name="Sugiura K."/>
            <person name="Sultana R."/>
            <person name="Takenaka Y."/>
            <person name="Taki K."/>
            <person name="Tammoja K."/>
            <person name="Tan S.L."/>
            <person name="Tang S."/>
            <person name="Taylor M.S."/>
            <person name="Tegner J."/>
            <person name="Teichmann S.A."/>
            <person name="Ueda H.R."/>
            <person name="van Nimwegen E."/>
            <person name="Verardo R."/>
            <person name="Wei C.L."/>
            <person name="Yagi K."/>
            <person name="Yamanishi H."/>
            <person name="Zabarovsky E."/>
            <person name="Zhu S."/>
            <person name="Zimmer A."/>
            <person name="Hide W."/>
            <person name="Bult C."/>
            <person name="Grimmond S.M."/>
            <person name="Teasdale R.D."/>
            <person name="Liu E.T."/>
            <person name="Brusic V."/>
            <person name="Quackenbush J."/>
            <person name="Wahlestedt C."/>
            <person name="Mattick J.S."/>
            <person name="Hume D.A."/>
            <person name="Kai C."/>
            <person name="Sasaki D."/>
            <person name="Tomaru Y."/>
            <person name="Fukuda S."/>
            <person name="Kanamori-Katayama M."/>
            <person name="Suzuki M."/>
            <person name="Aoki J."/>
            <person name="Arakawa T."/>
            <person name="Iida J."/>
            <person name="Imamura K."/>
            <person name="Itoh M."/>
            <person name="Kato T."/>
            <person name="Kawaji H."/>
            <person name="Kawagashira N."/>
            <person name="Kawashima T."/>
            <person name="Kojima M."/>
            <person name="Kondo S."/>
            <person name="Konno H."/>
            <person name="Nakano K."/>
            <person name="Ninomiya N."/>
            <person name="Nishio T."/>
            <person name="Okada M."/>
            <person name="Plessy C."/>
            <person name="Shibata K."/>
            <person name="Shiraki T."/>
            <person name="Suzuki S."/>
            <person name="Tagami M."/>
            <person name="Waki K."/>
            <person name="Watahiki A."/>
            <person name="Okamura-Oho Y."/>
            <person name="Suzuki H."/>
            <person name="Kawai J."/>
            <person name="Hayashizaki Y."/>
        </authorList>
    </citation>
    <scope>NUCLEOTIDE SEQUENCE [LARGE SCALE MRNA] OF 1752-1969</scope>
    <source>
        <strain>C57BL/6J</strain>
        <tissue>Oviduct</tissue>
    </source>
</reference>
<reference key="5">
    <citation type="journal article" date="2010" name="Cell">
        <title>A tissue-specific atlas of mouse protein phosphorylation and expression.</title>
        <authorList>
            <person name="Huttlin E.L."/>
            <person name="Jedrychowski M.P."/>
            <person name="Elias J.E."/>
            <person name="Goswami T."/>
            <person name="Rad R."/>
            <person name="Beausoleil S.A."/>
            <person name="Villen J."/>
            <person name="Haas W."/>
            <person name="Sowa M.E."/>
            <person name="Gygi S.P."/>
        </authorList>
    </citation>
    <scope>IDENTIFICATION BY MASS SPECTROMETRY [LARGE SCALE ANALYSIS]</scope>
</reference>
<reference key="6">
    <citation type="journal article" date="2014" name="Mol. Cell. Proteomics">
        <title>Immunoaffinity enrichment and mass spectrometry analysis of protein methylation.</title>
        <authorList>
            <person name="Guo A."/>
            <person name="Gu H."/>
            <person name="Zhou J."/>
            <person name="Mulhern D."/>
            <person name="Wang Y."/>
            <person name="Lee K.A."/>
            <person name="Yang V."/>
            <person name="Aguiar M."/>
            <person name="Kornhauser J."/>
            <person name="Jia X."/>
            <person name="Ren J."/>
            <person name="Beausoleil S.A."/>
            <person name="Silva J.C."/>
            <person name="Vemulapalli V."/>
            <person name="Bedford M.T."/>
            <person name="Comb M.J."/>
        </authorList>
    </citation>
    <scope>IDENTIFICATION BY MASS SPECTROMETRY [LARGE SCALE ANALYSIS]</scope>
</reference>
<reference key="7">
    <citation type="journal article" date="2004" name="Mol. Cell. Biol.">
        <title>Vault poly(ADP-ribose) polymerase is associated with mammalian telomerase and is dispensable for telomerase function and vault structure in vivo.</title>
        <authorList>
            <person name="Liu Y."/>
            <person name="Snow B.E."/>
            <person name="Kickhoefer V.A."/>
            <person name="Erdmann N."/>
            <person name="Zhou W."/>
            <person name="Wakeham A."/>
            <person name="Gomez M."/>
            <person name="Rome L.H."/>
            <person name="Harrington L."/>
        </authorList>
    </citation>
    <scope>DISRUPTION PHENOTYPE</scope>
</reference>
<organism>
    <name type="scientific">Mus musculus</name>
    <name type="common">Mouse</name>
    <dbReference type="NCBI Taxonomy" id="10090"/>
    <lineage>
        <taxon>Eukaryota</taxon>
        <taxon>Metazoa</taxon>
        <taxon>Chordata</taxon>
        <taxon>Craniata</taxon>
        <taxon>Vertebrata</taxon>
        <taxon>Euteleostomi</taxon>
        <taxon>Mammalia</taxon>
        <taxon>Eutheria</taxon>
        <taxon>Euarchontoglires</taxon>
        <taxon>Glires</taxon>
        <taxon>Rodentia</taxon>
        <taxon>Myomorpha</taxon>
        <taxon>Muroidea</taxon>
        <taxon>Muridae</taxon>
        <taxon>Murinae</taxon>
        <taxon>Mus</taxon>
        <taxon>Mus</taxon>
    </lineage>
</organism>
<name>PARP4_MOUSE</name>